<evidence type="ECO:0000250" key="1"/>
<evidence type="ECO:0000255" key="2"/>
<evidence type="ECO:0000269" key="3">
    <source>
    </source>
</evidence>
<evidence type="ECO:0000305" key="4"/>
<keyword id="KW-0968">Cytoplasmic vesicle</keyword>
<keyword id="KW-0342">GTP-binding</keyword>
<keyword id="KW-0449">Lipoprotein</keyword>
<keyword id="KW-0519">Myristate</keyword>
<keyword id="KW-0547">Nucleotide-binding</keyword>
<keyword id="KW-1267">Proteomics identification</keyword>
<keyword id="KW-1185">Reference proteome</keyword>
<reference key="1">
    <citation type="journal article" date="2004" name="Nat. Genet.">
        <title>Complete sequencing and characterization of 21,243 full-length human cDNAs.</title>
        <authorList>
            <person name="Ota T."/>
            <person name="Suzuki Y."/>
            <person name="Nishikawa T."/>
            <person name="Otsuki T."/>
            <person name="Sugiyama T."/>
            <person name="Irie R."/>
            <person name="Wakamatsu A."/>
            <person name="Hayashi K."/>
            <person name="Sato H."/>
            <person name="Nagai K."/>
            <person name="Kimura K."/>
            <person name="Makita H."/>
            <person name="Sekine M."/>
            <person name="Obayashi M."/>
            <person name="Nishi T."/>
            <person name="Shibahara T."/>
            <person name="Tanaka T."/>
            <person name="Ishii S."/>
            <person name="Yamamoto J."/>
            <person name="Saito K."/>
            <person name="Kawai Y."/>
            <person name="Isono Y."/>
            <person name="Nakamura Y."/>
            <person name="Nagahari K."/>
            <person name="Murakami K."/>
            <person name="Yasuda T."/>
            <person name="Iwayanagi T."/>
            <person name="Wagatsuma M."/>
            <person name="Shiratori A."/>
            <person name="Sudo H."/>
            <person name="Hosoiri T."/>
            <person name="Kaku Y."/>
            <person name="Kodaira H."/>
            <person name="Kondo H."/>
            <person name="Sugawara M."/>
            <person name="Takahashi M."/>
            <person name="Kanda K."/>
            <person name="Yokoi T."/>
            <person name="Furuya T."/>
            <person name="Kikkawa E."/>
            <person name="Omura Y."/>
            <person name="Abe K."/>
            <person name="Kamihara K."/>
            <person name="Katsuta N."/>
            <person name="Sato K."/>
            <person name="Tanikawa M."/>
            <person name="Yamazaki M."/>
            <person name="Ninomiya K."/>
            <person name="Ishibashi T."/>
            <person name="Yamashita H."/>
            <person name="Murakawa K."/>
            <person name="Fujimori K."/>
            <person name="Tanai H."/>
            <person name="Kimata M."/>
            <person name="Watanabe M."/>
            <person name="Hiraoka S."/>
            <person name="Chiba Y."/>
            <person name="Ishida S."/>
            <person name="Ono Y."/>
            <person name="Takiguchi S."/>
            <person name="Watanabe S."/>
            <person name="Yosida M."/>
            <person name="Hotuta T."/>
            <person name="Kusano J."/>
            <person name="Kanehori K."/>
            <person name="Takahashi-Fujii A."/>
            <person name="Hara H."/>
            <person name="Tanase T.-O."/>
            <person name="Nomura Y."/>
            <person name="Togiya S."/>
            <person name="Komai F."/>
            <person name="Hara R."/>
            <person name="Takeuchi K."/>
            <person name="Arita M."/>
            <person name="Imose N."/>
            <person name="Musashino K."/>
            <person name="Yuuki H."/>
            <person name="Oshima A."/>
            <person name="Sasaki N."/>
            <person name="Aotsuka S."/>
            <person name="Yoshikawa Y."/>
            <person name="Matsunawa H."/>
            <person name="Ichihara T."/>
            <person name="Shiohata N."/>
            <person name="Sano S."/>
            <person name="Moriya S."/>
            <person name="Momiyama H."/>
            <person name="Satoh N."/>
            <person name="Takami S."/>
            <person name="Terashima Y."/>
            <person name="Suzuki O."/>
            <person name="Nakagawa S."/>
            <person name="Senoh A."/>
            <person name="Mizoguchi H."/>
            <person name="Goto Y."/>
            <person name="Shimizu F."/>
            <person name="Wakebe H."/>
            <person name="Hishigaki H."/>
            <person name="Watanabe T."/>
            <person name="Sugiyama A."/>
            <person name="Takemoto M."/>
            <person name="Kawakami B."/>
            <person name="Yamazaki M."/>
            <person name="Watanabe K."/>
            <person name="Kumagai A."/>
            <person name="Itakura S."/>
            <person name="Fukuzumi Y."/>
            <person name="Fujimori Y."/>
            <person name="Komiyama M."/>
            <person name="Tashiro H."/>
            <person name="Tanigami A."/>
            <person name="Fujiwara T."/>
            <person name="Ono T."/>
            <person name="Yamada K."/>
            <person name="Fujii Y."/>
            <person name="Ozaki K."/>
            <person name="Hirao M."/>
            <person name="Ohmori Y."/>
            <person name="Kawabata A."/>
            <person name="Hikiji T."/>
            <person name="Kobatake N."/>
            <person name="Inagaki H."/>
            <person name="Ikema Y."/>
            <person name="Okamoto S."/>
            <person name="Okitani R."/>
            <person name="Kawakami T."/>
            <person name="Noguchi S."/>
            <person name="Itoh T."/>
            <person name="Shigeta K."/>
            <person name="Senba T."/>
            <person name="Matsumura K."/>
            <person name="Nakajima Y."/>
            <person name="Mizuno T."/>
            <person name="Morinaga M."/>
            <person name="Sasaki M."/>
            <person name="Togashi T."/>
            <person name="Oyama M."/>
            <person name="Hata H."/>
            <person name="Watanabe M."/>
            <person name="Komatsu T."/>
            <person name="Mizushima-Sugano J."/>
            <person name="Satoh T."/>
            <person name="Shirai Y."/>
            <person name="Takahashi Y."/>
            <person name="Nakagawa K."/>
            <person name="Okumura K."/>
            <person name="Nagase T."/>
            <person name="Nomura N."/>
            <person name="Kikuchi H."/>
            <person name="Masuho Y."/>
            <person name="Yamashita R."/>
            <person name="Nakai K."/>
            <person name="Yada T."/>
            <person name="Nakamura Y."/>
            <person name="Ohara O."/>
            <person name="Isogai T."/>
            <person name="Sugano S."/>
        </authorList>
    </citation>
    <scope>NUCLEOTIDE SEQUENCE [LARGE SCALE MRNA]</scope>
    <source>
        <tissue>Small intestine</tissue>
    </source>
</reference>
<reference key="2">
    <citation type="journal article" date="2006" name="Nature">
        <title>The DNA sequence, annotation and analysis of human chromosome 3.</title>
        <authorList>
            <person name="Muzny D.M."/>
            <person name="Scherer S.E."/>
            <person name="Kaul R."/>
            <person name="Wang J."/>
            <person name="Yu J."/>
            <person name="Sudbrak R."/>
            <person name="Buhay C.J."/>
            <person name="Chen R."/>
            <person name="Cree A."/>
            <person name="Ding Y."/>
            <person name="Dugan-Rocha S."/>
            <person name="Gill R."/>
            <person name="Gunaratne P."/>
            <person name="Harris R.A."/>
            <person name="Hawes A.C."/>
            <person name="Hernandez J."/>
            <person name="Hodgson A.V."/>
            <person name="Hume J."/>
            <person name="Jackson A."/>
            <person name="Khan Z.M."/>
            <person name="Kovar-Smith C."/>
            <person name="Lewis L.R."/>
            <person name="Lozado R.J."/>
            <person name="Metzker M.L."/>
            <person name="Milosavljevic A."/>
            <person name="Miner G.R."/>
            <person name="Morgan M.B."/>
            <person name="Nazareth L.V."/>
            <person name="Scott G."/>
            <person name="Sodergren E."/>
            <person name="Song X.-Z."/>
            <person name="Steffen D."/>
            <person name="Wei S."/>
            <person name="Wheeler D.A."/>
            <person name="Wright M.W."/>
            <person name="Worley K.C."/>
            <person name="Yuan Y."/>
            <person name="Zhang Z."/>
            <person name="Adams C.Q."/>
            <person name="Ansari-Lari M.A."/>
            <person name="Ayele M."/>
            <person name="Brown M.J."/>
            <person name="Chen G."/>
            <person name="Chen Z."/>
            <person name="Clendenning J."/>
            <person name="Clerc-Blankenburg K.P."/>
            <person name="Chen R."/>
            <person name="Chen Z."/>
            <person name="Davis C."/>
            <person name="Delgado O."/>
            <person name="Dinh H.H."/>
            <person name="Dong W."/>
            <person name="Draper H."/>
            <person name="Ernst S."/>
            <person name="Fu G."/>
            <person name="Gonzalez-Garay M.L."/>
            <person name="Garcia D.K."/>
            <person name="Gillett W."/>
            <person name="Gu J."/>
            <person name="Hao B."/>
            <person name="Haugen E."/>
            <person name="Havlak P."/>
            <person name="He X."/>
            <person name="Hennig S."/>
            <person name="Hu S."/>
            <person name="Huang W."/>
            <person name="Jackson L.R."/>
            <person name="Jacob L.S."/>
            <person name="Kelly S.H."/>
            <person name="Kube M."/>
            <person name="Levy R."/>
            <person name="Li Z."/>
            <person name="Liu B."/>
            <person name="Liu J."/>
            <person name="Liu W."/>
            <person name="Lu J."/>
            <person name="Maheshwari M."/>
            <person name="Nguyen B.-V."/>
            <person name="Okwuonu G.O."/>
            <person name="Palmeiri A."/>
            <person name="Pasternak S."/>
            <person name="Perez L.M."/>
            <person name="Phelps K.A."/>
            <person name="Plopper F.J."/>
            <person name="Qiang B."/>
            <person name="Raymond C."/>
            <person name="Rodriguez R."/>
            <person name="Saenphimmachak C."/>
            <person name="Santibanez J."/>
            <person name="Shen H."/>
            <person name="Shen Y."/>
            <person name="Subramanian S."/>
            <person name="Tabor P.E."/>
            <person name="Verduzco D."/>
            <person name="Waldron L."/>
            <person name="Wang J."/>
            <person name="Wang J."/>
            <person name="Wang Q."/>
            <person name="Williams G.A."/>
            <person name="Wong G.K.-S."/>
            <person name="Yao Z."/>
            <person name="Zhang J."/>
            <person name="Zhang X."/>
            <person name="Zhao G."/>
            <person name="Zhou J."/>
            <person name="Zhou Y."/>
            <person name="Nelson D."/>
            <person name="Lehrach H."/>
            <person name="Reinhardt R."/>
            <person name="Naylor S.L."/>
            <person name="Yang H."/>
            <person name="Olson M."/>
            <person name="Weinstock G."/>
            <person name="Gibbs R.A."/>
        </authorList>
    </citation>
    <scope>NUCLEOTIDE SEQUENCE [LARGE SCALE GENOMIC DNA]</scope>
</reference>
<reference key="3">
    <citation type="journal article" date="2004" name="Genome Res.">
        <title>The status, quality, and expansion of the NIH full-length cDNA project: the Mammalian Gene Collection (MGC).</title>
        <authorList>
            <consortium name="The MGC Project Team"/>
        </authorList>
    </citation>
    <scope>NUCLEOTIDE SEQUENCE [LARGE SCALE MRNA]</scope>
    <source>
        <tissue>Skin</tissue>
    </source>
</reference>
<reference key="4">
    <citation type="journal article" date="2011" name="Cell">
        <title>A Genome-wide multidimensional RNAi screen reveals pathways controlling MHC class II antigen presentation.</title>
        <authorList>
            <person name="Paul P."/>
            <person name="van den Hoorn T."/>
            <person name="Jongsma M.L."/>
            <person name="Bakker M.J."/>
            <person name="Hengeveld R."/>
            <person name="Janssen L."/>
            <person name="Cresswell P."/>
            <person name="Egan D.A."/>
            <person name="van Ham M."/>
            <person name="Ten Brinke A."/>
            <person name="Ovaa H."/>
            <person name="Beijersbergen R.L."/>
            <person name="Kuijl C."/>
            <person name="Neefjes J."/>
        </authorList>
    </citation>
    <scope>FUNCTION</scope>
    <scope>INTERACTION WITH ARL14EP</scope>
    <scope>SUBCELLULAR LOCATION</scope>
    <scope>TISSUE SPECIFICITY</scope>
</reference>
<sequence>MGSLGSKNPQTKQAQVLLLGLDSAGKSTLLYKLKLAKDITTIPTIGFNVEMIELERNLSLTVWDVGGQEKMRTVWGCYCENTDGLVYVVDSTDKQRLEESQRQFEHILKNEHIKNVPVVLLANKQDMPGALTAEDITRMFKVKKLCSDRNWYVQPCCALTGEGLAQGFRKLTGFVKSHMKSRGDTLAFFKQN</sequence>
<gene>
    <name type="primary">ARL14</name>
    <name type="synonym">ARF7</name>
</gene>
<feature type="initiator methionine" description="Removed" evidence="2">
    <location>
        <position position="1"/>
    </location>
</feature>
<feature type="chain" id="PRO_0000281147" description="ADP-ribosylation factor-like protein 14">
    <location>
        <begin position="2"/>
        <end position="192"/>
    </location>
</feature>
<feature type="binding site" evidence="1">
    <location>
        <begin position="20"/>
        <end position="27"/>
    </location>
    <ligand>
        <name>GTP</name>
        <dbReference type="ChEBI" id="CHEBI:37565"/>
    </ligand>
</feature>
<feature type="binding site" evidence="1">
    <location>
        <begin position="64"/>
        <end position="68"/>
    </location>
    <ligand>
        <name>GTP</name>
        <dbReference type="ChEBI" id="CHEBI:37565"/>
    </ligand>
</feature>
<feature type="binding site" evidence="1">
    <location>
        <begin position="123"/>
        <end position="126"/>
    </location>
    <ligand>
        <name>GTP</name>
        <dbReference type="ChEBI" id="CHEBI:37565"/>
    </ligand>
</feature>
<feature type="lipid moiety-binding region" description="N-myristoyl glycine" evidence="2">
    <location>
        <position position="2"/>
    </location>
</feature>
<feature type="sequence variant" id="VAR_055521" description="In dbSNP:rs35634980.">
    <original>D</original>
    <variation>N</variation>
    <location>
        <position position="83"/>
    </location>
</feature>
<feature type="sequence variant" id="VAR_055522" description="In dbSNP:rs35633732.">
    <original>P</original>
    <variation>T</variation>
    <location>
        <position position="117"/>
    </location>
</feature>
<feature type="sequence conflict" description="In Ref. 3; AAH34354." evidence="4" ref="3">
    <original>L</original>
    <variation>F</variation>
    <location>
        <position position="58"/>
    </location>
</feature>
<dbReference type="EMBL" id="AK026248">
    <property type="protein sequence ID" value="BAB15411.1"/>
    <property type="molecule type" value="mRNA"/>
</dbReference>
<dbReference type="EMBL" id="AC069224">
    <property type="status" value="NOT_ANNOTATED_CDS"/>
    <property type="molecule type" value="Genomic_DNA"/>
</dbReference>
<dbReference type="EMBL" id="BC034354">
    <property type="protein sequence ID" value="AAH34354.1"/>
    <property type="molecule type" value="mRNA"/>
</dbReference>
<dbReference type="CCDS" id="CCDS3192.1"/>
<dbReference type="RefSeq" id="NP_079323.1">
    <property type="nucleotide sequence ID" value="NM_025047.3"/>
</dbReference>
<dbReference type="SMR" id="Q8N4G2"/>
<dbReference type="BioGRID" id="123121">
    <property type="interactions" value="117"/>
</dbReference>
<dbReference type="FunCoup" id="Q8N4G2">
    <property type="interactions" value="263"/>
</dbReference>
<dbReference type="IntAct" id="Q8N4G2">
    <property type="interactions" value="7"/>
</dbReference>
<dbReference type="STRING" id="9606.ENSP00000323847"/>
<dbReference type="iPTMnet" id="Q8N4G2"/>
<dbReference type="PhosphoSitePlus" id="Q8N4G2"/>
<dbReference type="BioMuta" id="ARL14"/>
<dbReference type="DMDM" id="296434398"/>
<dbReference type="jPOST" id="Q8N4G2"/>
<dbReference type="MassIVE" id="Q8N4G2"/>
<dbReference type="PaxDb" id="9606-ENSP00000323847"/>
<dbReference type="PeptideAtlas" id="Q8N4G2"/>
<dbReference type="ProteomicsDB" id="71929"/>
<dbReference type="Antibodypedia" id="33672">
    <property type="antibodies" value="78 antibodies from 22 providers"/>
</dbReference>
<dbReference type="DNASU" id="80117"/>
<dbReference type="Ensembl" id="ENST00000320767.4">
    <property type="protein sequence ID" value="ENSP00000323847.2"/>
    <property type="gene ID" value="ENSG00000179674.4"/>
</dbReference>
<dbReference type="GeneID" id="80117"/>
<dbReference type="KEGG" id="hsa:80117"/>
<dbReference type="MANE-Select" id="ENST00000320767.4">
    <property type="protein sequence ID" value="ENSP00000323847.2"/>
    <property type="RefSeq nucleotide sequence ID" value="NM_025047.3"/>
    <property type="RefSeq protein sequence ID" value="NP_079323.1"/>
</dbReference>
<dbReference type="UCSC" id="uc003fdq.4">
    <property type="organism name" value="human"/>
</dbReference>
<dbReference type="AGR" id="HGNC:22974"/>
<dbReference type="CTD" id="80117"/>
<dbReference type="DisGeNET" id="80117"/>
<dbReference type="GeneCards" id="ARL14"/>
<dbReference type="HGNC" id="HGNC:22974">
    <property type="gene designation" value="ARL14"/>
</dbReference>
<dbReference type="HPA" id="ENSG00000179674">
    <property type="expression patterns" value="Tissue enhanced (gallbladder, intestine, stomach)"/>
</dbReference>
<dbReference type="MIM" id="614439">
    <property type="type" value="gene"/>
</dbReference>
<dbReference type="neXtProt" id="NX_Q8N4G2"/>
<dbReference type="OpenTargets" id="ENSG00000179674"/>
<dbReference type="PharmGKB" id="PA134971739"/>
<dbReference type="VEuPathDB" id="HostDB:ENSG00000179674"/>
<dbReference type="eggNOG" id="KOG0070">
    <property type="taxonomic scope" value="Eukaryota"/>
</dbReference>
<dbReference type="GeneTree" id="ENSGT00940000162138"/>
<dbReference type="HOGENOM" id="CLU_040729_9_2_1"/>
<dbReference type="InParanoid" id="Q8N4G2"/>
<dbReference type="OMA" id="AQIIMLG"/>
<dbReference type="OrthoDB" id="6228084at2759"/>
<dbReference type="PAN-GO" id="Q8N4G2">
    <property type="GO annotations" value="5 GO annotations based on evolutionary models"/>
</dbReference>
<dbReference type="PhylomeDB" id="Q8N4G2"/>
<dbReference type="TreeFam" id="TF332600"/>
<dbReference type="PathwayCommons" id="Q8N4G2"/>
<dbReference type="SignaLink" id="Q8N4G2"/>
<dbReference type="BioGRID-ORCS" id="80117">
    <property type="hits" value="17 hits in 1142 CRISPR screens"/>
</dbReference>
<dbReference type="GenomeRNAi" id="80117"/>
<dbReference type="Pharos" id="Q8N4G2">
    <property type="development level" value="Tbio"/>
</dbReference>
<dbReference type="PRO" id="PR:Q8N4G2"/>
<dbReference type="Proteomes" id="UP000005640">
    <property type="component" value="Chromosome 3"/>
</dbReference>
<dbReference type="RNAct" id="Q8N4G2">
    <property type="molecule type" value="protein"/>
</dbReference>
<dbReference type="Bgee" id="ENSG00000179674">
    <property type="expression patterns" value="Expressed in mucosa of sigmoid colon and 81 other cell types or tissues"/>
</dbReference>
<dbReference type="GO" id="GO:0005737">
    <property type="term" value="C:cytoplasm"/>
    <property type="evidence" value="ECO:0000318"/>
    <property type="project" value="GO_Central"/>
</dbReference>
<dbReference type="GO" id="GO:0031410">
    <property type="term" value="C:cytoplasmic vesicle"/>
    <property type="evidence" value="ECO:0007669"/>
    <property type="project" value="UniProtKB-KW"/>
</dbReference>
<dbReference type="GO" id="GO:0005886">
    <property type="term" value="C:plasma membrane"/>
    <property type="evidence" value="ECO:0000318"/>
    <property type="project" value="GO_Central"/>
</dbReference>
<dbReference type="GO" id="GO:0005525">
    <property type="term" value="F:GTP binding"/>
    <property type="evidence" value="ECO:0000318"/>
    <property type="project" value="GO_Central"/>
</dbReference>
<dbReference type="GO" id="GO:0003924">
    <property type="term" value="F:GTPase activity"/>
    <property type="evidence" value="ECO:0007669"/>
    <property type="project" value="InterPro"/>
</dbReference>
<dbReference type="GO" id="GO:0006886">
    <property type="term" value="P:intracellular protein transport"/>
    <property type="evidence" value="ECO:0000318"/>
    <property type="project" value="GO_Central"/>
</dbReference>
<dbReference type="GO" id="GO:0016192">
    <property type="term" value="P:vesicle-mediated transport"/>
    <property type="evidence" value="ECO:0000318"/>
    <property type="project" value="GO_Central"/>
</dbReference>
<dbReference type="CDD" id="cd04156">
    <property type="entry name" value="ARLTS1"/>
    <property type="match status" value="1"/>
</dbReference>
<dbReference type="FunFam" id="3.40.50.300:FF:000412">
    <property type="entry name" value="ADP-ribosylation factor 1"/>
    <property type="match status" value="1"/>
</dbReference>
<dbReference type="Gene3D" id="3.40.50.300">
    <property type="entry name" value="P-loop containing nucleotide triphosphate hydrolases"/>
    <property type="match status" value="1"/>
</dbReference>
<dbReference type="InterPro" id="IPR027417">
    <property type="entry name" value="P-loop_NTPase"/>
</dbReference>
<dbReference type="InterPro" id="IPR005225">
    <property type="entry name" value="Small_GTP-bd"/>
</dbReference>
<dbReference type="InterPro" id="IPR024156">
    <property type="entry name" value="Small_GTPase_ARF"/>
</dbReference>
<dbReference type="InterPro" id="IPR006689">
    <property type="entry name" value="Small_GTPase_ARF/SAR"/>
</dbReference>
<dbReference type="NCBIfam" id="TIGR00231">
    <property type="entry name" value="small_GTP"/>
    <property type="match status" value="1"/>
</dbReference>
<dbReference type="PANTHER" id="PTHR11711">
    <property type="entry name" value="ADP RIBOSYLATION FACTOR-RELATED"/>
    <property type="match status" value="1"/>
</dbReference>
<dbReference type="Pfam" id="PF00025">
    <property type="entry name" value="Arf"/>
    <property type="match status" value="1"/>
</dbReference>
<dbReference type="PRINTS" id="PR00328">
    <property type="entry name" value="SAR1GTPBP"/>
</dbReference>
<dbReference type="SMART" id="SM00177">
    <property type="entry name" value="ARF"/>
    <property type="match status" value="1"/>
</dbReference>
<dbReference type="SMART" id="SM00175">
    <property type="entry name" value="RAB"/>
    <property type="match status" value="1"/>
</dbReference>
<dbReference type="SMART" id="SM00178">
    <property type="entry name" value="SAR"/>
    <property type="match status" value="1"/>
</dbReference>
<dbReference type="SUPFAM" id="SSF52540">
    <property type="entry name" value="P-loop containing nucleoside triphosphate hydrolases"/>
    <property type="match status" value="1"/>
</dbReference>
<dbReference type="PROSITE" id="PS51417">
    <property type="entry name" value="ARF"/>
    <property type="match status" value="1"/>
</dbReference>
<name>ARL14_HUMAN</name>
<comment type="function">
    <text evidence="3">GTPase that recruits MYO1E to MHC class II-containing vesicles via the effector protein ARL14EP and hence controls the movement of these vesicles along the actin cytoskeleton in dendritic cells.</text>
</comment>
<comment type="subunit">
    <text evidence="3">Interacts with ARL14EP.</text>
</comment>
<comment type="interaction">
    <interactant intactId="EBI-3921493">
        <id>Q8N4G2</id>
    </interactant>
    <interactant intactId="EBI-2807994">
        <id>Q8N8R7</id>
        <label>ARL14EP</label>
    </interactant>
    <organismsDiffer>false</organismsDiffer>
    <experiments>3</experiments>
</comment>
<comment type="interaction">
    <interactant intactId="EBI-3921493">
        <id>Q8N4G2</id>
    </interactant>
    <interactant intactId="EBI-2813180">
        <id>Q86VI1</id>
        <label>EXOC3L1</label>
    </interactant>
    <organismsDiffer>false</organismsDiffer>
    <experiments>3</experiments>
</comment>
<comment type="subcellular location">
    <subcellularLocation>
        <location evidence="3">Cytoplasmic vesicle</location>
    </subcellularLocation>
    <text>Colocalizes with MHC II-containing cytoplasmic vesicles.</text>
</comment>
<comment type="tissue specificity">
    <text evidence="3">Expressed in immature dendritic cells.</text>
</comment>
<comment type="similarity">
    <text evidence="4">Belongs to the small GTPase superfamily. Arf family.</text>
</comment>
<organism>
    <name type="scientific">Homo sapiens</name>
    <name type="common">Human</name>
    <dbReference type="NCBI Taxonomy" id="9606"/>
    <lineage>
        <taxon>Eukaryota</taxon>
        <taxon>Metazoa</taxon>
        <taxon>Chordata</taxon>
        <taxon>Craniata</taxon>
        <taxon>Vertebrata</taxon>
        <taxon>Euteleostomi</taxon>
        <taxon>Mammalia</taxon>
        <taxon>Eutheria</taxon>
        <taxon>Euarchontoglires</taxon>
        <taxon>Primates</taxon>
        <taxon>Haplorrhini</taxon>
        <taxon>Catarrhini</taxon>
        <taxon>Hominidae</taxon>
        <taxon>Homo</taxon>
    </lineage>
</organism>
<proteinExistence type="evidence at protein level"/>
<accession>Q8N4G2</accession>
<accession>Q9H655</accession>
<protein>
    <recommendedName>
        <fullName>ADP-ribosylation factor-like protein 14</fullName>
    </recommendedName>
    <alternativeName>
        <fullName>ADP-ribosylation factor 7</fullName>
    </alternativeName>
</protein>